<accession>B5FQL2</accession>
<keyword id="KW-0963">Cytoplasm</keyword>
<keyword id="KW-0210">Decarboxylase</keyword>
<keyword id="KW-0456">Lyase</keyword>
<keyword id="KW-0627">Porphyrin biosynthesis</keyword>
<protein>
    <recommendedName>
        <fullName evidence="1">Uroporphyrinogen decarboxylase</fullName>
        <shortName evidence="1">UPD</shortName>
        <shortName evidence="1">URO-D</shortName>
        <ecNumber evidence="1">4.1.1.37</ecNumber>
    </recommendedName>
</protein>
<sequence length="354" mass="39079">MTELKNDRYLRALLRQPVDVTPVWMMRQAGRYLPEYKATRAQAGDFMSLCKNAELACEVTLQPLRRYPLDAAILFSDILTIPDAMGLGLYFEAGEGPRFTAPVTCKADVEKLPIPDPEGELGYVMNAVRTIRRELKGEVPLIGFSGSPWTLATYMVEGGSSKAFTVIKKMMYADPQALHLLLDKLAKSVTLYLNAQIKAGAQSVMIFDTWGGVLTGRDYQQFSLYYMHKIVDGLLRENDGRCVPVTLFTKGGGQWLEAMAETGCDALGLDWTTDIADARRRVGHKVALQGNMDPSMLYAPPARIEDEVATILAGFGQGEGHVFNLGHGIHQDVPPEHAGAFVEAVHRLSAQYHN</sequence>
<comment type="function">
    <text evidence="1">Catalyzes the decarboxylation of four acetate groups of uroporphyrinogen-III to yield coproporphyrinogen-III.</text>
</comment>
<comment type="catalytic activity">
    <reaction evidence="1">
        <text>uroporphyrinogen III + 4 H(+) = coproporphyrinogen III + 4 CO2</text>
        <dbReference type="Rhea" id="RHEA:19865"/>
        <dbReference type="ChEBI" id="CHEBI:15378"/>
        <dbReference type="ChEBI" id="CHEBI:16526"/>
        <dbReference type="ChEBI" id="CHEBI:57308"/>
        <dbReference type="ChEBI" id="CHEBI:57309"/>
        <dbReference type="EC" id="4.1.1.37"/>
    </reaction>
</comment>
<comment type="pathway">
    <text evidence="1">Porphyrin-containing compound metabolism; protoporphyrin-IX biosynthesis; coproporphyrinogen-III from 5-aminolevulinate: step 4/4.</text>
</comment>
<comment type="subunit">
    <text evidence="1">Homodimer.</text>
</comment>
<comment type="subcellular location">
    <subcellularLocation>
        <location evidence="1">Cytoplasm</location>
    </subcellularLocation>
</comment>
<comment type="similarity">
    <text evidence="1">Belongs to the uroporphyrinogen decarboxylase family.</text>
</comment>
<evidence type="ECO:0000255" key="1">
    <source>
        <dbReference type="HAMAP-Rule" id="MF_00218"/>
    </source>
</evidence>
<dbReference type="EC" id="4.1.1.37" evidence="1"/>
<dbReference type="EMBL" id="CP001144">
    <property type="protein sequence ID" value="ACH74701.1"/>
    <property type="molecule type" value="Genomic_DNA"/>
</dbReference>
<dbReference type="RefSeq" id="WP_000137622.1">
    <property type="nucleotide sequence ID" value="NC_011205.1"/>
</dbReference>
<dbReference type="SMR" id="B5FQL2"/>
<dbReference type="KEGG" id="sed:SeD_A4574"/>
<dbReference type="HOGENOM" id="CLU_040933_0_0_6"/>
<dbReference type="UniPathway" id="UPA00251">
    <property type="reaction ID" value="UER00321"/>
</dbReference>
<dbReference type="Proteomes" id="UP000008322">
    <property type="component" value="Chromosome"/>
</dbReference>
<dbReference type="GO" id="GO:0005829">
    <property type="term" value="C:cytosol"/>
    <property type="evidence" value="ECO:0007669"/>
    <property type="project" value="TreeGrafter"/>
</dbReference>
<dbReference type="GO" id="GO:0004853">
    <property type="term" value="F:uroporphyrinogen decarboxylase activity"/>
    <property type="evidence" value="ECO:0007669"/>
    <property type="project" value="UniProtKB-UniRule"/>
</dbReference>
<dbReference type="GO" id="GO:0019353">
    <property type="term" value="P:protoporphyrinogen IX biosynthetic process from glutamate"/>
    <property type="evidence" value="ECO:0007669"/>
    <property type="project" value="TreeGrafter"/>
</dbReference>
<dbReference type="CDD" id="cd00717">
    <property type="entry name" value="URO-D"/>
    <property type="match status" value="1"/>
</dbReference>
<dbReference type="FunFam" id="3.20.20.210:FF:000001">
    <property type="entry name" value="Uroporphyrinogen decarboxylase"/>
    <property type="match status" value="1"/>
</dbReference>
<dbReference type="Gene3D" id="3.20.20.210">
    <property type="match status" value="1"/>
</dbReference>
<dbReference type="HAMAP" id="MF_00218">
    <property type="entry name" value="URO_D"/>
    <property type="match status" value="1"/>
</dbReference>
<dbReference type="InterPro" id="IPR038071">
    <property type="entry name" value="UROD/MetE-like_sf"/>
</dbReference>
<dbReference type="InterPro" id="IPR006361">
    <property type="entry name" value="Uroporphyrinogen_deCO2ase_HemE"/>
</dbReference>
<dbReference type="InterPro" id="IPR000257">
    <property type="entry name" value="Uroporphyrinogen_deCOase"/>
</dbReference>
<dbReference type="NCBIfam" id="TIGR01464">
    <property type="entry name" value="hemE"/>
    <property type="match status" value="1"/>
</dbReference>
<dbReference type="PANTHER" id="PTHR21091">
    <property type="entry name" value="METHYLTETRAHYDROFOLATE:HOMOCYSTEINE METHYLTRANSFERASE RELATED"/>
    <property type="match status" value="1"/>
</dbReference>
<dbReference type="PANTHER" id="PTHR21091:SF169">
    <property type="entry name" value="UROPORPHYRINOGEN DECARBOXYLASE"/>
    <property type="match status" value="1"/>
</dbReference>
<dbReference type="Pfam" id="PF01208">
    <property type="entry name" value="URO-D"/>
    <property type="match status" value="1"/>
</dbReference>
<dbReference type="SUPFAM" id="SSF51726">
    <property type="entry name" value="UROD/MetE-like"/>
    <property type="match status" value="1"/>
</dbReference>
<dbReference type="PROSITE" id="PS00906">
    <property type="entry name" value="UROD_1"/>
    <property type="match status" value="1"/>
</dbReference>
<dbReference type="PROSITE" id="PS00907">
    <property type="entry name" value="UROD_2"/>
    <property type="match status" value="1"/>
</dbReference>
<feature type="chain" id="PRO_1000100012" description="Uroporphyrinogen decarboxylase">
    <location>
        <begin position="1"/>
        <end position="354"/>
    </location>
</feature>
<feature type="binding site" evidence="1">
    <location>
        <begin position="27"/>
        <end position="31"/>
    </location>
    <ligand>
        <name>substrate</name>
    </ligand>
</feature>
<feature type="binding site" evidence="1">
    <location>
        <position position="77"/>
    </location>
    <ligand>
        <name>substrate</name>
    </ligand>
</feature>
<feature type="binding site" evidence="1">
    <location>
        <position position="154"/>
    </location>
    <ligand>
        <name>substrate</name>
    </ligand>
</feature>
<feature type="binding site" evidence="1">
    <location>
        <position position="209"/>
    </location>
    <ligand>
        <name>substrate</name>
    </ligand>
</feature>
<feature type="binding site" evidence="1">
    <location>
        <position position="327"/>
    </location>
    <ligand>
        <name>substrate</name>
    </ligand>
</feature>
<feature type="site" description="Transition state stabilizer" evidence="1">
    <location>
        <position position="77"/>
    </location>
</feature>
<proteinExistence type="inferred from homology"/>
<reference key="1">
    <citation type="journal article" date="2011" name="J. Bacteriol.">
        <title>Comparative genomics of 28 Salmonella enterica isolates: evidence for CRISPR-mediated adaptive sublineage evolution.</title>
        <authorList>
            <person name="Fricke W.F."/>
            <person name="Mammel M.K."/>
            <person name="McDermott P.F."/>
            <person name="Tartera C."/>
            <person name="White D.G."/>
            <person name="Leclerc J.E."/>
            <person name="Ravel J."/>
            <person name="Cebula T.A."/>
        </authorList>
    </citation>
    <scope>NUCLEOTIDE SEQUENCE [LARGE SCALE GENOMIC DNA]</scope>
    <source>
        <strain>CT_02021853</strain>
    </source>
</reference>
<gene>
    <name evidence="1" type="primary">hemE</name>
    <name type="ordered locus">SeD_A4574</name>
</gene>
<name>DCUP_SALDC</name>
<organism>
    <name type="scientific">Salmonella dublin (strain CT_02021853)</name>
    <dbReference type="NCBI Taxonomy" id="439851"/>
    <lineage>
        <taxon>Bacteria</taxon>
        <taxon>Pseudomonadati</taxon>
        <taxon>Pseudomonadota</taxon>
        <taxon>Gammaproteobacteria</taxon>
        <taxon>Enterobacterales</taxon>
        <taxon>Enterobacteriaceae</taxon>
        <taxon>Salmonella</taxon>
    </lineage>
</organism>